<name>URE1_EDWI9</name>
<reference key="1">
    <citation type="submission" date="2009-03" db="EMBL/GenBank/DDBJ databases">
        <title>Complete genome sequence of Edwardsiella ictaluri 93-146.</title>
        <authorList>
            <person name="Williams M.L."/>
            <person name="Gillaspy A.F."/>
            <person name="Dyer D.W."/>
            <person name="Thune R.L."/>
            <person name="Waldbieser G.C."/>
            <person name="Schuster S.C."/>
            <person name="Gipson J."/>
            <person name="Zaitshik J."/>
            <person name="Landry C."/>
            <person name="Lawrence M.L."/>
        </authorList>
    </citation>
    <scope>NUCLEOTIDE SEQUENCE [LARGE SCALE GENOMIC DNA]</scope>
    <source>
        <strain>93-146</strain>
    </source>
</reference>
<gene>
    <name evidence="1" type="primary">ureC</name>
    <name type="ordered locus">NT01EI_2061</name>
</gene>
<evidence type="ECO:0000255" key="1">
    <source>
        <dbReference type="HAMAP-Rule" id="MF_01953"/>
    </source>
</evidence>
<organism>
    <name type="scientific">Edwardsiella ictaluri (strain 93-146)</name>
    <dbReference type="NCBI Taxonomy" id="634503"/>
    <lineage>
        <taxon>Bacteria</taxon>
        <taxon>Pseudomonadati</taxon>
        <taxon>Pseudomonadota</taxon>
        <taxon>Gammaproteobacteria</taxon>
        <taxon>Enterobacterales</taxon>
        <taxon>Hafniaceae</taxon>
        <taxon>Edwardsiella</taxon>
    </lineage>
</organism>
<keyword id="KW-0963">Cytoplasm</keyword>
<keyword id="KW-0378">Hydrolase</keyword>
<keyword id="KW-0479">Metal-binding</keyword>
<keyword id="KW-0533">Nickel</keyword>
<feature type="chain" id="PRO_1000216196" description="Urease subunit alpha">
    <location>
        <begin position="1"/>
        <end position="572"/>
    </location>
</feature>
<feature type="domain" description="Urease" evidence="1">
    <location>
        <begin position="134"/>
        <end position="572"/>
    </location>
</feature>
<feature type="active site" description="Proton donor" evidence="1">
    <location>
        <position position="325"/>
    </location>
</feature>
<feature type="binding site" evidence="1">
    <location>
        <position position="139"/>
    </location>
    <ligand>
        <name>Ni(2+)</name>
        <dbReference type="ChEBI" id="CHEBI:49786"/>
        <label>1</label>
    </ligand>
</feature>
<feature type="binding site" evidence="1">
    <location>
        <position position="141"/>
    </location>
    <ligand>
        <name>Ni(2+)</name>
        <dbReference type="ChEBI" id="CHEBI:49786"/>
        <label>1</label>
    </ligand>
</feature>
<feature type="binding site" description="via carbamate group" evidence="1">
    <location>
        <position position="222"/>
    </location>
    <ligand>
        <name>Ni(2+)</name>
        <dbReference type="ChEBI" id="CHEBI:49786"/>
        <label>1</label>
    </ligand>
</feature>
<feature type="binding site" description="via carbamate group" evidence="1">
    <location>
        <position position="222"/>
    </location>
    <ligand>
        <name>Ni(2+)</name>
        <dbReference type="ChEBI" id="CHEBI:49786"/>
        <label>2</label>
    </ligand>
</feature>
<feature type="binding site" evidence="1">
    <location>
        <position position="224"/>
    </location>
    <ligand>
        <name>substrate</name>
    </ligand>
</feature>
<feature type="binding site" evidence="1">
    <location>
        <position position="251"/>
    </location>
    <ligand>
        <name>Ni(2+)</name>
        <dbReference type="ChEBI" id="CHEBI:49786"/>
        <label>2</label>
    </ligand>
</feature>
<feature type="binding site" evidence="1">
    <location>
        <position position="277"/>
    </location>
    <ligand>
        <name>Ni(2+)</name>
        <dbReference type="ChEBI" id="CHEBI:49786"/>
        <label>2</label>
    </ligand>
</feature>
<feature type="binding site" evidence="1">
    <location>
        <position position="365"/>
    </location>
    <ligand>
        <name>Ni(2+)</name>
        <dbReference type="ChEBI" id="CHEBI:49786"/>
        <label>1</label>
    </ligand>
</feature>
<feature type="modified residue" description="N6-carboxylysine" evidence="1">
    <location>
        <position position="222"/>
    </location>
</feature>
<accession>C5BBR6</accession>
<proteinExistence type="inferred from homology"/>
<sequence>MPHVSRKEYSSLFGPTVGDKIRLGNTELFIEIEKDLRGYGDESVYGGGKSLRDGMGANNNLTRDNGVLDLVITNVTIIDACLGVIKADVGIKDGKISGIGKSGNPNTMDGVTPTMVVGASTDAISGEHLILTAAGIDTHIHLISPQQAYHALSNGVTTFFGGGIGPTDGSNGTTVTAGPWNIRQMLRSFESLPLNVGLLGKGNACGYGPLEEQIIAGAAGLKVHEDWGATASALRYALRIADKMDIQVAVHTDSLNEGGYVEDTIDAFEGRTVHTFHTEGAGGGHAPDIIKVASLMNVLPSSTNPTLPFGINSQAELFDMIMICHNLNPNVPADVAFAESRVRPETIAAENVLQDMGVISMFSSDSQAMGRVGENWLRLIQTANAMKVARGKLPEDAAGNDNFRVLRYVAKITINPAIAQGVSHVIGSIEVGKMADLVLWDPRFFGAKPKMVIKGGMISWSTMGDSNASLPTTQPITYRPMFGAMGKTMNDTCVTFVSQASLEDGVREKAGLDRNVIAVKNCRNVSKQDLVRNNNMPNIDVDPETFAVKVDGVHATCKPVDIAAMNQLYFFG</sequence>
<dbReference type="EC" id="3.5.1.5" evidence="1"/>
<dbReference type="EMBL" id="CP001600">
    <property type="protein sequence ID" value="ACR69237.1"/>
    <property type="molecule type" value="Genomic_DNA"/>
</dbReference>
<dbReference type="RefSeq" id="WP_015871369.1">
    <property type="nucleotide sequence ID" value="NC_012779.2"/>
</dbReference>
<dbReference type="SMR" id="C5BBR6"/>
<dbReference type="KEGG" id="eic:NT01EI_2061"/>
<dbReference type="HOGENOM" id="CLU_000980_0_0_6"/>
<dbReference type="OrthoDB" id="9802793at2"/>
<dbReference type="UniPathway" id="UPA00258">
    <property type="reaction ID" value="UER00370"/>
</dbReference>
<dbReference type="Proteomes" id="UP000001485">
    <property type="component" value="Chromosome"/>
</dbReference>
<dbReference type="GO" id="GO:0005737">
    <property type="term" value="C:cytoplasm"/>
    <property type="evidence" value="ECO:0007669"/>
    <property type="project" value="UniProtKB-SubCell"/>
</dbReference>
<dbReference type="GO" id="GO:0016151">
    <property type="term" value="F:nickel cation binding"/>
    <property type="evidence" value="ECO:0007669"/>
    <property type="project" value="UniProtKB-UniRule"/>
</dbReference>
<dbReference type="GO" id="GO:0009039">
    <property type="term" value="F:urease activity"/>
    <property type="evidence" value="ECO:0007669"/>
    <property type="project" value="UniProtKB-UniRule"/>
</dbReference>
<dbReference type="GO" id="GO:0043419">
    <property type="term" value="P:urea catabolic process"/>
    <property type="evidence" value="ECO:0007669"/>
    <property type="project" value="UniProtKB-UniRule"/>
</dbReference>
<dbReference type="CDD" id="cd00375">
    <property type="entry name" value="Urease_alpha"/>
    <property type="match status" value="1"/>
</dbReference>
<dbReference type="Gene3D" id="3.20.20.140">
    <property type="entry name" value="Metal-dependent hydrolases"/>
    <property type="match status" value="1"/>
</dbReference>
<dbReference type="Gene3D" id="2.30.40.10">
    <property type="entry name" value="Urease, subunit C, domain 1"/>
    <property type="match status" value="1"/>
</dbReference>
<dbReference type="HAMAP" id="MF_01953">
    <property type="entry name" value="Urease_alpha"/>
    <property type="match status" value="1"/>
</dbReference>
<dbReference type="InterPro" id="IPR006680">
    <property type="entry name" value="Amidohydro-rel"/>
</dbReference>
<dbReference type="InterPro" id="IPR011059">
    <property type="entry name" value="Metal-dep_hydrolase_composite"/>
</dbReference>
<dbReference type="InterPro" id="IPR032466">
    <property type="entry name" value="Metal_Hydrolase"/>
</dbReference>
<dbReference type="InterPro" id="IPR011612">
    <property type="entry name" value="Urease_alpha_N_dom"/>
</dbReference>
<dbReference type="InterPro" id="IPR050112">
    <property type="entry name" value="Urease_alpha_subunit"/>
</dbReference>
<dbReference type="InterPro" id="IPR017950">
    <property type="entry name" value="Urease_AS"/>
</dbReference>
<dbReference type="InterPro" id="IPR005848">
    <property type="entry name" value="Urease_asu"/>
</dbReference>
<dbReference type="InterPro" id="IPR017951">
    <property type="entry name" value="Urease_asu_c"/>
</dbReference>
<dbReference type="InterPro" id="IPR029754">
    <property type="entry name" value="Urease_Ni-bd"/>
</dbReference>
<dbReference type="NCBIfam" id="NF009686">
    <property type="entry name" value="PRK13207.1"/>
    <property type="match status" value="1"/>
</dbReference>
<dbReference type="NCBIfam" id="NF009834">
    <property type="entry name" value="PRK13309.1"/>
    <property type="match status" value="1"/>
</dbReference>
<dbReference type="NCBIfam" id="TIGR01792">
    <property type="entry name" value="urease_alph"/>
    <property type="match status" value="1"/>
</dbReference>
<dbReference type="PANTHER" id="PTHR43440">
    <property type="entry name" value="UREASE"/>
    <property type="match status" value="1"/>
</dbReference>
<dbReference type="PANTHER" id="PTHR43440:SF1">
    <property type="entry name" value="UREASE"/>
    <property type="match status" value="1"/>
</dbReference>
<dbReference type="Pfam" id="PF01979">
    <property type="entry name" value="Amidohydro_1"/>
    <property type="match status" value="1"/>
</dbReference>
<dbReference type="Pfam" id="PF00449">
    <property type="entry name" value="Urease_alpha"/>
    <property type="match status" value="1"/>
</dbReference>
<dbReference type="PRINTS" id="PR01752">
    <property type="entry name" value="UREASE"/>
</dbReference>
<dbReference type="SUPFAM" id="SSF51338">
    <property type="entry name" value="Composite domain of metallo-dependent hydrolases"/>
    <property type="match status" value="2"/>
</dbReference>
<dbReference type="SUPFAM" id="SSF51556">
    <property type="entry name" value="Metallo-dependent hydrolases"/>
    <property type="match status" value="1"/>
</dbReference>
<dbReference type="PROSITE" id="PS01120">
    <property type="entry name" value="UREASE_1"/>
    <property type="match status" value="1"/>
</dbReference>
<dbReference type="PROSITE" id="PS00145">
    <property type="entry name" value="UREASE_2"/>
    <property type="match status" value="1"/>
</dbReference>
<dbReference type="PROSITE" id="PS51368">
    <property type="entry name" value="UREASE_3"/>
    <property type="match status" value="1"/>
</dbReference>
<protein>
    <recommendedName>
        <fullName evidence="1">Urease subunit alpha</fullName>
        <ecNumber evidence="1">3.5.1.5</ecNumber>
    </recommendedName>
    <alternativeName>
        <fullName evidence="1">Urea amidohydrolase subunit alpha</fullName>
    </alternativeName>
</protein>
<comment type="catalytic activity">
    <reaction evidence="1">
        <text>urea + 2 H2O + H(+) = hydrogencarbonate + 2 NH4(+)</text>
        <dbReference type="Rhea" id="RHEA:20557"/>
        <dbReference type="ChEBI" id="CHEBI:15377"/>
        <dbReference type="ChEBI" id="CHEBI:15378"/>
        <dbReference type="ChEBI" id="CHEBI:16199"/>
        <dbReference type="ChEBI" id="CHEBI:17544"/>
        <dbReference type="ChEBI" id="CHEBI:28938"/>
        <dbReference type="EC" id="3.5.1.5"/>
    </reaction>
</comment>
<comment type="cofactor">
    <cofactor evidence="1">
        <name>Ni cation</name>
        <dbReference type="ChEBI" id="CHEBI:25516"/>
    </cofactor>
    <text evidence="1">Binds 2 nickel ions per subunit.</text>
</comment>
<comment type="pathway">
    <text evidence="1">Nitrogen metabolism; urea degradation; CO(2) and NH(3) from urea (urease route): step 1/1.</text>
</comment>
<comment type="subunit">
    <text evidence="1">Heterotrimer of UreA (gamma), UreB (beta) and UreC (alpha) subunits. Three heterotrimers associate to form the active enzyme.</text>
</comment>
<comment type="subcellular location">
    <subcellularLocation>
        <location evidence="1">Cytoplasm</location>
    </subcellularLocation>
</comment>
<comment type="PTM">
    <text evidence="1">Carboxylation allows a single lysine to coordinate two nickel ions.</text>
</comment>
<comment type="similarity">
    <text evidence="1">Belongs to the metallo-dependent hydrolases superfamily. Urease alpha subunit family.</text>
</comment>